<keyword id="KW-0963">Cytoplasm</keyword>
<keyword id="KW-0269">Exonuclease</keyword>
<keyword id="KW-0378">Hydrolase</keyword>
<keyword id="KW-0540">Nuclease</keyword>
<reference key="1">
    <citation type="journal article" date="2011" name="J. Bacteriol.">
        <title>Comparative genomics of 28 Salmonella enterica isolates: evidence for CRISPR-mediated adaptive sublineage evolution.</title>
        <authorList>
            <person name="Fricke W.F."/>
            <person name="Mammel M.K."/>
            <person name="McDermott P.F."/>
            <person name="Tartera C."/>
            <person name="White D.G."/>
            <person name="Leclerc J.E."/>
            <person name="Ravel J."/>
            <person name="Cebula T.A."/>
        </authorList>
    </citation>
    <scope>NUCLEOTIDE SEQUENCE [LARGE SCALE GENOMIC DNA]</scope>
    <source>
        <strain>SL254</strain>
    </source>
</reference>
<gene>
    <name evidence="1" type="primary">xseA</name>
    <name type="ordered locus">SNSL254_A2705</name>
</gene>
<protein>
    <recommendedName>
        <fullName evidence="1">Exodeoxyribonuclease 7 large subunit</fullName>
        <ecNumber evidence="1">3.1.11.6</ecNumber>
    </recommendedName>
    <alternativeName>
        <fullName evidence="1">Exodeoxyribonuclease VII large subunit</fullName>
        <shortName evidence="1">Exonuclease VII large subunit</shortName>
    </alternativeName>
</protein>
<organism>
    <name type="scientific">Salmonella newport (strain SL254)</name>
    <dbReference type="NCBI Taxonomy" id="423368"/>
    <lineage>
        <taxon>Bacteria</taxon>
        <taxon>Pseudomonadati</taxon>
        <taxon>Pseudomonadota</taxon>
        <taxon>Gammaproteobacteria</taxon>
        <taxon>Enterobacterales</taxon>
        <taxon>Enterobacteriaceae</taxon>
        <taxon>Salmonella</taxon>
    </lineage>
</organism>
<feature type="chain" id="PRO_1000122085" description="Exodeoxyribonuclease 7 large subunit">
    <location>
        <begin position="1"/>
        <end position="449"/>
    </location>
</feature>
<dbReference type="EC" id="3.1.11.6" evidence="1"/>
<dbReference type="EMBL" id="CP001113">
    <property type="protein sequence ID" value="ACF64692.1"/>
    <property type="molecule type" value="Genomic_DNA"/>
</dbReference>
<dbReference type="RefSeq" id="WP_000953179.1">
    <property type="nucleotide sequence ID" value="NZ_CCMR01000001.1"/>
</dbReference>
<dbReference type="SMR" id="B4T0N9"/>
<dbReference type="KEGG" id="see:SNSL254_A2705"/>
<dbReference type="HOGENOM" id="CLU_023625_3_1_6"/>
<dbReference type="Proteomes" id="UP000008824">
    <property type="component" value="Chromosome"/>
</dbReference>
<dbReference type="GO" id="GO:0005737">
    <property type="term" value="C:cytoplasm"/>
    <property type="evidence" value="ECO:0007669"/>
    <property type="project" value="UniProtKB-SubCell"/>
</dbReference>
<dbReference type="GO" id="GO:0009318">
    <property type="term" value="C:exodeoxyribonuclease VII complex"/>
    <property type="evidence" value="ECO:0007669"/>
    <property type="project" value="InterPro"/>
</dbReference>
<dbReference type="GO" id="GO:0008855">
    <property type="term" value="F:exodeoxyribonuclease VII activity"/>
    <property type="evidence" value="ECO:0007669"/>
    <property type="project" value="UniProtKB-UniRule"/>
</dbReference>
<dbReference type="GO" id="GO:0003676">
    <property type="term" value="F:nucleic acid binding"/>
    <property type="evidence" value="ECO:0007669"/>
    <property type="project" value="InterPro"/>
</dbReference>
<dbReference type="GO" id="GO:0006308">
    <property type="term" value="P:DNA catabolic process"/>
    <property type="evidence" value="ECO:0007669"/>
    <property type="project" value="UniProtKB-UniRule"/>
</dbReference>
<dbReference type="CDD" id="cd04489">
    <property type="entry name" value="ExoVII_LU_OBF"/>
    <property type="match status" value="1"/>
</dbReference>
<dbReference type="HAMAP" id="MF_00378">
    <property type="entry name" value="Exonuc_7_L"/>
    <property type="match status" value="1"/>
</dbReference>
<dbReference type="InterPro" id="IPR003753">
    <property type="entry name" value="Exonuc_VII_L"/>
</dbReference>
<dbReference type="InterPro" id="IPR020579">
    <property type="entry name" value="Exonuc_VII_lsu_C"/>
</dbReference>
<dbReference type="InterPro" id="IPR025824">
    <property type="entry name" value="OB-fold_nuc-bd_dom"/>
</dbReference>
<dbReference type="NCBIfam" id="TIGR00237">
    <property type="entry name" value="xseA"/>
    <property type="match status" value="1"/>
</dbReference>
<dbReference type="PANTHER" id="PTHR30008">
    <property type="entry name" value="EXODEOXYRIBONUCLEASE 7 LARGE SUBUNIT"/>
    <property type="match status" value="1"/>
</dbReference>
<dbReference type="PANTHER" id="PTHR30008:SF0">
    <property type="entry name" value="EXODEOXYRIBONUCLEASE 7 LARGE SUBUNIT"/>
    <property type="match status" value="1"/>
</dbReference>
<dbReference type="Pfam" id="PF02601">
    <property type="entry name" value="Exonuc_VII_L"/>
    <property type="match status" value="1"/>
</dbReference>
<dbReference type="Pfam" id="PF13742">
    <property type="entry name" value="tRNA_anti_2"/>
    <property type="match status" value="1"/>
</dbReference>
<comment type="function">
    <text evidence="1">Bidirectionally degrades single-stranded DNA into large acid-insoluble oligonucleotides, which are then degraded further into small acid-soluble oligonucleotides.</text>
</comment>
<comment type="catalytic activity">
    <reaction evidence="1">
        <text>Exonucleolytic cleavage in either 5'- to 3'- or 3'- to 5'-direction to yield nucleoside 5'-phosphates.</text>
        <dbReference type="EC" id="3.1.11.6"/>
    </reaction>
</comment>
<comment type="subunit">
    <text evidence="1">Heterooligomer composed of large and small subunits.</text>
</comment>
<comment type="subcellular location">
    <subcellularLocation>
        <location evidence="1">Cytoplasm</location>
    </subcellularLocation>
</comment>
<comment type="similarity">
    <text evidence="1">Belongs to the XseA family.</text>
</comment>
<name>EX7L_SALNS</name>
<sequence length="449" mass="50626">MLSSQTSSIFTVSRLNQTVRLLLEQEMGQVWISGEISNFTQPASGHWYFTLKDDTAQVRCAMFRNSNRRVTFRPQHGQQVLVRANITLYEPRGDYQVIAESMQPAGEGLLQQKYEQLKAKLQAEGLFDQQHKQPLPSPAHCVGVITSKTGAALHDILHVLKRRDPSLPVIIYPTAVQGDDAPGQIVRAIELANARGECDVLIVGRGGGSLEDLWSFNDERVARAIFASRIPVVSAVGHETDVTIADFVADLRAPTPSAAAEIVSRNQQELLRQIQSAQQRLGMAMDYYLANRSRRFTQIFHRLQQQHPQLRLARQQTALERLRQRMGFALEARIKQATQRQQRVSQRLSQQNPQPRIHRAQSRIQQLEYRLTENIRSRLSEQRERFGNAVTHLEAVSPLATLARGYTVSTTTDGKVLKKIKQVNAGDIMTTRLEDGWLESEVKSVTPGT</sequence>
<accession>B4T0N9</accession>
<evidence type="ECO:0000255" key="1">
    <source>
        <dbReference type="HAMAP-Rule" id="MF_00378"/>
    </source>
</evidence>
<proteinExistence type="inferred from homology"/>